<name>MURA1_BACCR</name>
<proteinExistence type="inferred from homology"/>
<reference key="1">
    <citation type="journal article" date="2003" name="Nature">
        <title>Genome sequence of Bacillus cereus and comparative analysis with Bacillus anthracis.</title>
        <authorList>
            <person name="Ivanova N."/>
            <person name="Sorokin A."/>
            <person name="Anderson I."/>
            <person name="Galleron N."/>
            <person name="Candelon B."/>
            <person name="Kapatral V."/>
            <person name="Bhattacharyya A."/>
            <person name="Reznik G."/>
            <person name="Mikhailova N."/>
            <person name="Lapidus A."/>
            <person name="Chu L."/>
            <person name="Mazur M."/>
            <person name="Goltsman E."/>
            <person name="Larsen N."/>
            <person name="D'Souza M."/>
            <person name="Walunas T."/>
            <person name="Grechkin Y."/>
            <person name="Pusch G."/>
            <person name="Haselkorn R."/>
            <person name="Fonstein M."/>
            <person name="Ehrlich S.D."/>
            <person name="Overbeek R."/>
            <person name="Kyrpides N.C."/>
        </authorList>
    </citation>
    <scope>NUCLEOTIDE SEQUENCE [LARGE SCALE GENOMIC DNA]</scope>
    <source>
        <strain>ATCC 14579 / DSM 31 / CCUG 7414 / JCM 2152 / NBRC 15305 / NCIMB 9373 / NCTC 2599 / NRRL B-3711</strain>
    </source>
</reference>
<organism>
    <name type="scientific">Bacillus cereus (strain ATCC 14579 / DSM 31 / CCUG 7414 / JCM 2152 / NBRC 15305 / NCIMB 9373 / NCTC 2599 / NRRL B-3711)</name>
    <dbReference type="NCBI Taxonomy" id="226900"/>
    <lineage>
        <taxon>Bacteria</taxon>
        <taxon>Bacillati</taxon>
        <taxon>Bacillota</taxon>
        <taxon>Bacilli</taxon>
        <taxon>Bacillales</taxon>
        <taxon>Bacillaceae</taxon>
        <taxon>Bacillus</taxon>
        <taxon>Bacillus cereus group</taxon>
    </lineage>
</organism>
<feature type="chain" id="PRO_0000231157" description="UDP-N-acetylglucosamine 1-carboxyvinyltransferase 1">
    <location>
        <begin position="1"/>
        <end position="434"/>
    </location>
</feature>
<feature type="active site" description="Proton donor" evidence="1">
    <location>
        <position position="117"/>
    </location>
</feature>
<feature type="binding site" evidence="1">
    <location>
        <begin position="22"/>
        <end position="23"/>
    </location>
    <ligand>
        <name>phosphoenolpyruvate</name>
        <dbReference type="ChEBI" id="CHEBI:58702"/>
    </ligand>
</feature>
<feature type="binding site" evidence="1">
    <location>
        <position position="93"/>
    </location>
    <ligand>
        <name>UDP-N-acetyl-alpha-D-glucosamine</name>
        <dbReference type="ChEBI" id="CHEBI:57705"/>
    </ligand>
</feature>
<feature type="binding site" evidence="1">
    <location>
        <begin position="122"/>
        <end position="126"/>
    </location>
    <ligand>
        <name>UDP-N-acetyl-alpha-D-glucosamine</name>
        <dbReference type="ChEBI" id="CHEBI:57705"/>
    </ligand>
</feature>
<feature type="binding site" evidence="1">
    <location>
        <position position="306"/>
    </location>
    <ligand>
        <name>UDP-N-acetyl-alpha-D-glucosamine</name>
        <dbReference type="ChEBI" id="CHEBI:57705"/>
    </ligand>
</feature>
<feature type="binding site" evidence="1">
    <location>
        <position position="328"/>
    </location>
    <ligand>
        <name>UDP-N-acetyl-alpha-D-glucosamine</name>
        <dbReference type="ChEBI" id="CHEBI:57705"/>
    </ligand>
</feature>
<feature type="modified residue" description="2-(S-cysteinyl)pyruvic acid O-phosphothioketal" evidence="1">
    <location>
        <position position="117"/>
    </location>
</feature>
<sequence>MEKIIVRGGKRLNGTVRVEGAKNAVLPIIAAALLASDGKNVLSEVPVLSDVYTINEVLRHLNAEVVFENNQVTIDSSKELNIEAPFEYVRKMRASVQVMGPLLARNGRARIALPGGCAIGSRPIDQHLKGFEAMGAKVQVGNGFVEAYVEGELKGAKIYLDFPSVGATENIMSAATLAKGTTILENAAKEPEIVDLANFLNAMGAKVRGAGTGTIRIEGVDKLYGANHSIIPDRIEAGTFMVAAAITGGDILIENAVPEHLRSITAKMEEMGVKIIEENEGVRVIGPDKLKAVDIKTMPHPGFPTDMQSQMMALLLQADGTSMITETVFENRFMHVEEFRRMNADIKIEGRSVIMNGPNSLQGAEVAATDLRAAAALILAGLVSEGYTRVTELKHLDRGYVNFHKKLAALGATIERVNEKVEEVKEQEVSDLHA</sequence>
<evidence type="ECO:0000255" key="1">
    <source>
        <dbReference type="HAMAP-Rule" id="MF_00111"/>
    </source>
</evidence>
<protein>
    <recommendedName>
        <fullName evidence="1">UDP-N-acetylglucosamine 1-carboxyvinyltransferase 1</fullName>
        <ecNumber evidence="1">2.5.1.7</ecNumber>
    </recommendedName>
    <alternativeName>
        <fullName evidence="1">Enoylpyruvate transferase 1</fullName>
    </alternativeName>
    <alternativeName>
        <fullName evidence="1">UDP-N-acetylglucosamine enolpyruvyl transferase 1</fullName>
        <shortName evidence="1">EPT 1</shortName>
    </alternativeName>
</protein>
<keyword id="KW-0131">Cell cycle</keyword>
<keyword id="KW-0132">Cell division</keyword>
<keyword id="KW-0133">Cell shape</keyword>
<keyword id="KW-0961">Cell wall biogenesis/degradation</keyword>
<keyword id="KW-0963">Cytoplasm</keyword>
<keyword id="KW-0573">Peptidoglycan synthesis</keyword>
<keyword id="KW-0670">Pyruvate</keyword>
<keyword id="KW-1185">Reference proteome</keyword>
<keyword id="KW-0808">Transferase</keyword>
<accession>Q814X9</accession>
<gene>
    <name evidence="1" type="primary">murA1</name>
    <name type="ordered locus">BC_5288</name>
</gene>
<dbReference type="EC" id="2.5.1.7" evidence="1"/>
<dbReference type="EMBL" id="AE016877">
    <property type="protein sequence ID" value="AAP12152.1"/>
    <property type="molecule type" value="Genomic_DNA"/>
</dbReference>
<dbReference type="RefSeq" id="NP_834951.1">
    <property type="nucleotide sequence ID" value="NC_004722.1"/>
</dbReference>
<dbReference type="SMR" id="Q814X9"/>
<dbReference type="STRING" id="226900.BC_5288"/>
<dbReference type="MetOSite" id="Q814X9"/>
<dbReference type="KEGG" id="bce:BC5288"/>
<dbReference type="PATRIC" id="fig|226900.8.peg.5459"/>
<dbReference type="HOGENOM" id="CLU_027387_0_0_9"/>
<dbReference type="OrthoDB" id="9803760at2"/>
<dbReference type="UniPathway" id="UPA00219"/>
<dbReference type="Proteomes" id="UP000001417">
    <property type="component" value="Chromosome"/>
</dbReference>
<dbReference type="GO" id="GO:0005737">
    <property type="term" value="C:cytoplasm"/>
    <property type="evidence" value="ECO:0007669"/>
    <property type="project" value="UniProtKB-SubCell"/>
</dbReference>
<dbReference type="GO" id="GO:0008760">
    <property type="term" value="F:UDP-N-acetylglucosamine 1-carboxyvinyltransferase activity"/>
    <property type="evidence" value="ECO:0007669"/>
    <property type="project" value="UniProtKB-UniRule"/>
</dbReference>
<dbReference type="GO" id="GO:0051301">
    <property type="term" value="P:cell division"/>
    <property type="evidence" value="ECO:0007669"/>
    <property type="project" value="UniProtKB-KW"/>
</dbReference>
<dbReference type="GO" id="GO:0071555">
    <property type="term" value="P:cell wall organization"/>
    <property type="evidence" value="ECO:0007669"/>
    <property type="project" value="UniProtKB-KW"/>
</dbReference>
<dbReference type="GO" id="GO:0009252">
    <property type="term" value="P:peptidoglycan biosynthetic process"/>
    <property type="evidence" value="ECO:0007669"/>
    <property type="project" value="UniProtKB-UniRule"/>
</dbReference>
<dbReference type="GO" id="GO:0008360">
    <property type="term" value="P:regulation of cell shape"/>
    <property type="evidence" value="ECO:0007669"/>
    <property type="project" value="UniProtKB-KW"/>
</dbReference>
<dbReference type="GO" id="GO:0019277">
    <property type="term" value="P:UDP-N-acetylgalactosamine biosynthetic process"/>
    <property type="evidence" value="ECO:0007669"/>
    <property type="project" value="InterPro"/>
</dbReference>
<dbReference type="CDD" id="cd01555">
    <property type="entry name" value="UdpNAET"/>
    <property type="match status" value="1"/>
</dbReference>
<dbReference type="FunFam" id="3.65.10.10:FF:000001">
    <property type="entry name" value="UDP-N-acetylglucosamine 1-carboxyvinyltransferase"/>
    <property type="match status" value="1"/>
</dbReference>
<dbReference type="Gene3D" id="3.65.10.10">
    <property type="entry name" value="Enolpyruvate transferase domain"/>
    <property type="match status" value="2"/>
</dbReference>
<dbReference type="HAMAP" id="MF_00111">
    <property type="entry name" value="MurA"/>
    <property type="match status" value="1"/>
</dbReference>
<dbReference type="InterPro" id="IPR001986">
    <property type="entry name" value="Enolpyruvate_Tfrase_dom"/>
</dbReference>
<dbReference type="InterPro" id="IPR036968">
    <property type="entry name" value="Enolpyruvate_Tfrase_sf"/>
</dbReference>
<dbReference type="InterPro" id="IPR050068">
    <property type="entry name" value="MurA_subfamily"/>
</dbReference>
<dbReference type="InterPro" id="IPR013792">
    <property type="entry name" value="RNA3'P_cycl/enolpyr_Trfase_a/b"/>
</dbReference>
<dbReference type="InterPro" id="IPR005750">
    <property type="entry name" value="UDP_GlcNAc_COvinyl_MurA"/>
</dbReference>
<dbReference type="NCBIfam" id="TIGR01072">
    <property type="entry name" value="murA"/>
    <property type="match status" value="1"/>
</dbReference>
<dbReference type="NCBIfam" id="NF006873">
    <property type="entry name" value="PRK09369.1"/>
    <property type="match status" value="1"/>
</dbReference>
<dbReference type="NCBIfam" id="NF009470">
    <property type="entry name" value="PRK12830.1"/>
    <property type="match status" value="1"/>
</dbReference>
<dbReference type="PANTHER" id="PTHR43783">
    <property type="entry name" value="UDP-N-ACETYLGLUCOSAMINE 1-CARBOXYVINYLTRANSFERASE"/>
    <property type="match status" value="1"/>
</dbReference>
<dbReference type="PANTHER" id="PTHR43783:SF1">
    <property type="entry name" value="UDP-N-ACETYLGLUCOSAMINE 1-CARBOXYVINYLTRANSFERASE"/>
    <property type="match status" value="1"/>
</dbReference>
<dbReference type="Pfam" id="PF00275">
    <property type="entry name" value="EPSP_synthase"/>
    <property type="match status" value="1"/>
</dbReference>
<dbReference type="SUPFAM" id="SSF55205">
    <property type="entry name" value="EPT/RTPC-like"/>
    <property type="match status" value="1"/>
</dbReference>
<comment type="function">
    <text evidence="1">Cell wall formation. Adds enolpyruvyl to UDP-N-acetylglucosamine.</text>
</comment>
<comment type="catalytic activity">
    <reaction evidence="1">
        <text>phosphoenolpyruvate + UDP-N-acetyl-alpha-D-glucosamine = UDP-N-acetyl-3-O-(1-carboxyvinyl)-alpha-D-glucosamine + phosphate</text>
        <dbReference type="Rhea" id="RHEA:18681"/>
        <dbReference type="ChEBI" id="CHEBI:43474"/>
        <dbReference type="ChEBI" id="CHEBI:57705"/>
        <dbReference type="ChEBI" id="CHEBI:58702"/>
        <dbReference type="ChEBI" id="CHEBI:68483"/>
        <dbReference type="EC" id="2.5.1.7"/>
    </reaction>
</comment>
<comment type="pathway">
    <text evidence="1">Cell wall biogenesis; peptidoglycan biosynthesis.</text>
</comment>
<comment type="subcellular location">
    <subcellularLocation>
        <location evidence="1">Cytoplasm</location>
    </subcellularLocation>
</comment>
<comment type="similarity">
    <text evidence="1">Belongs to the EPSP synthase family. MurA subfamily.</text>
</comment>